<reference key="1">
    <citation type="journal article" date="2002" name="Nature">
        <title>Sequence and analysis of chromosome 2 of Dictyostelium discoideum.</title>
        <authorList>
            <person name="Gloeckner G."/>
            <person name="Eichinger L."/>
            <person name="Szafranski K."/>
            <person name="Pachebat J.A."/>
            <person name="Bankier A.T."/>
            <person name="Dear P.H."/>
            <person name="Lehmann R."/>
            <person name="Baumgart C."/>
            <person name="Parra G."/>
            <person name="Abril J.F."/>
            <person name="Guigo R."/>
            <person name="Kumpf K."/>
            <person name="Tunggal B."/>
            <person name="Cox E.C."/>
            <person name="Quail M.A."/>
            <person name="Platzer M."/>
            <person name="Rosenthal A."/>
            <person name="Noegel A.A."/>
        </authorList>
    </citation>
    <scope>NUCLEOTIDE SEQUENCE [LARGE SCALE GENOMIC DNA]</scope>
    <source>
        <strain>AX4</strain>
    </source>
</reference>
<reference key="2">
    <citation type="journal article" date="2005" name="Nature">
        <title>The genome of the social amoeba Dictyostelium discoideum.</title>
        <authorList>
            <person name="Eichinger L."/>
            <person name="Pachebat J.A."/>
            <person name="Gloeckner G."/>
            <person name="Rajandream M.A."/>
            <person name="Sucgang R."/>
            <person name="Berriman M."/>
            <person name="Song J."/>
            <person name="Olsen R."/>
            <person name="Szafranski K."/>
            <person name="Xu Q."/>
            <person name="Tunggal B."/>
            <person name="Kummerfeld S."/>
            <person name="Madera M."/>
            <person name="Konfortov B.A."/>
            <person name="Rivero F."/>
            <person name="Bankier A.T."/>
            <person name="Lehmann R."/>
            <person name="Hamlin N."/>
            <person name="Davies R."/>
            <person name="Gaudet P."/>
            <person name="Fey P."/>
            <person name="Pilcher K."/>
            <person name="Chen G."/>
            <person name="Saunders D."/>
            <person name="Sodergren E.J."/>
            <person name="Davis P."/>
            <person name="Kerhornou A."/>
            <person name="Nie X."/>
            <person name="Hall N."/>
            <person name="Anjard C."/>
            <person name="Hemphill L."/>
            <person name="Bason N."/>
            <person name="Farbrother P."/>
            <person name="Desany B."/>
            <person name="Just E."/>
            <person name="Morio T."/>
            <person name="Rost R."/>
            <person name="Churcher C.M."/>
            <person name="Cooper J."/>
            <person name="Haydock S."/>
            <person name="van Driessche N."/>
            <person name="Cronin A."/>
            <person name="Goodhead I."/>
            <person name="Muzny D.M."/>
            <person name="Mourier T."/>
            <person name="Pain A."/>
            <person name="Lu M."/>
            <person name="Harper D."/>
            <person name="Lindsay R."/>
            <person name="Hauser H."/>
            <person name="James K.D."/>
            <person name="Quiles M."/>
            <person name="Madan Babu M."/>
            <person name="Saito T."/>
            <person name="Buchrieser C."/>
            <person name="Wardroper A."/>
            <person name="Felder M."/>
            <person name="Thangavelu M."/>
            <person name="Johnson D."/>
            <person name="Knights A."/>
            <person name="Loulseged H."/>
            <person name="Mungall K.L."/>
            <person name="Oliver K."/>
            <person name="Price C."/>
            <person name="Quail M.A."/>
            <person name="Urushihara H."/>
            <person name="Hernandez J."/>
            <person name="Rabbinowitsch E."/>
            <person name="Steffen D."/>
            <person name="Sanders M."/>
            <person name="Ma J."/>
            <person name="Kohara Y."/>
            <person name="Sharp S."/>
            <person name="Simmonds M.N."/>
            <person name="Spiegler S."/>
            <person name="Tivey A."/>
            <person name="Sugano S."/>
            <person name="White B."/>
            <person name="Walker D."/>
            <person name="Woodward J.R."/>
            <person name="Winckler T."/>
            <person name="Tanaka Y."/>
            <person name="Shaulsky G."/>
            <person name="Schleicher M."/>
            <person name="Weinstock G.M."/>
            <person name="Rosenthal A."/>
            <person name="Cox E.C."/>
            <person name="Chisholm R.L."/>
            <person name="Gibbs R.A."/>
            <person name="Loomis W.F."/>
            <person name="Platzer M."/>
            <person name="Kay R.R."/>
            <person name="Williams J.G."/>
            <person name="Dear P.H."/>
            <person name="Noegel A.A."/>
            <person name="Barrell B.G."/>
            <person name="Kuspa A."/>
        </authorList>
    </citation>
    <scope>NUCLEOTIDE SEQUENCE [LARGE SCALE GENOMIC DNA]</scope>
    <source>
        <strain>AX4</strain>
    </source>
</reference>
<reference key="3">
    <citation type="journal article" date="2006" name="Eur. J. Cell Biol.">
        <title>The Dictyostelium repertoire of seven transmembrane domain receptors.</title>
        <authorList>
            <person name="Prabhu Y."/>
            <person name="Eichinger L."/>
        </authorList>
    </citation>
    <scope>NOMENCLATURE</scope>
</reference>
<reference key="4">
    <citation type="journal article" date="2007" name="BMC Dev. Biol.">
        <title>GrlJ, a Dictyostelium GABAB-like receptor with roles in post-aggregation development.</title>
        <authorList>
            <person name="Prabhu Y."/>
            <person name="Mueller R."/>
            <person name="Anjard C."/>
            <person name="Noegel A.A."/>
        </authorList>
    </citation>
    <scope>DEVELOPMENTAL STAGE</scope>
</reference>
<evidence type="ECO:0000255" key="1"/>
<evidence type="ECO:0000256" key="2">
    <source>
        <dbReference type="SAM" id="MobiDB-lite"/>
    </source>
</evidence>
<evidence type="ECO:0000269" key="3">
    <source>
    </source>
</evidence>
<evidence type="ECO:0000305" key="4"/>
<keyword id="KW-0297">G-protein coupled receptor</keyword>
<keyword id="KW-0325">Glycoprotein</keyword>
<keyword id="KW-0472">Membrane</keyword>
<keyword id="KW-0675">Receptor</keyword>
<keyword id="KW-1185">Reference proteome</keyword>
<keyword id="KW-0732">Signal</keyword>
<keyword id="KW-0807">Transducer</keyword>
<keyword id="KW-0812">Transmembrane</keyword>
<keyword id="KW-1133">Transmembrane helix</keyword>
<accession>Q86HH3</accession>
<accession>Q55AP2</accession>
<comment type="subcellular location">
    <subcellularLocation>
        <location evidence="4">Membrane</location>
        <topology evidence="4">Multi-pass membrane protein</topology>
    </subcellularLocation>
</comment>
<comment type="developmental stage">
    <text evidence="3">Increased levels found from the tight aggregation stage onward. Levels stayed high during late development. Clear expression at 24 hours when fruiting body formation is close to completion.</text>
</comment>
<comment type="similarity">
    <text evidence="4">In the N-terminal section; belongs to the BMP lipoprotein family.</text>
</comment>
<comment type="similarity">
    <text evidence="4">In the C-terminal section; belongs to the G-protein coupled receptor 3 family. GABA-B receptor subfamily.</text>
</comment>
<dbReference type="EMBL" id="AAFI02000006">
    <property type="protein sequence ID" value="EAL71533.1"/>
    <property type="molecule type" value="Genomic_DNA"/>
</dbReference>
<dbReference type="RefSeq" id="XP_645480.1">
    <property type="nucleotide sequence ID" value="XM_640388.1"/>
</dbReference>
<dbReference type="SMR" id="Q86HH3"/>
<dbReference type="FunCoup" id="Q86HH3">
    <property type="interactions" value="19"/>
</dbReference>
<dbReference type="STRING" id="44689.Q86HH3"/>
<dbReference type="GlyCosmos" id="Q86HH3">
    <property type="glycosylation" value="3 sites, No reported glycans"/>
</dbReference>
<dbReference type="GlyGen" id="Q86HH3">
    <property type="glycosylation" value="3 sites"/>
</dbReference>
<dbReference type="PaxDb" id="44689-DDB0231970"/>
<dbReference type="EnsemblProtists" id="EAL71533">
    <property type="protein sequence ID" value="EAL71533"/>
    <property type="gene ID" value="DDB_G0271686"/>
</dbReference>
<dbReference type="GeneID" id="8618108"/>
<dbReference type="KEGG" id="ddi:DDB_G0271686"/>
<dbReference type="dictyBase" id="DDB_G0271686">
    <property type="gene designation" value="grlB"/>
</dbReference>
<dbReference type="VEuPathDB" id="AmoebaDB:DDB_G0271686"/>
<dbReference type="eggNOG" id="KOG1055">
    <property type="taxonomic scope" value="Eukaryota"/>
</dbReference>
<dbReference type="HOGENOM" id="CLU_365408_0_0_1"/>
<dbReference type="InParanoid" id="Q86HH3"/>
<dbReference type="OMA" id="YASHVIN"/>
<dbReference type="PhylomeDB" id="Q86HH3"/>
<dbReference type="PRO" id="PR:Q86HH3"/>
<dbReference type="Proteomes" id="UP000002195">
    <property type="component" value="Chromosome 2"/>
</dbReference>
<dbReference type="GO" id="GO:0005886">
    <property type="term" value="C:plasma membrane"/>
    <property type="evidence" value="ECO:0000314"/>
    <property type="project" value="dictyBase"/>
</dbReference>
<dbReference type="GO" id="GO:0004930">
    <property type="term" value="F:G protein-coupled receptor activity"/>
    <property type="evidence" value="ECO:0000318"/>
    <property type="project" value="GO_Central"/>
</dbReference>
<dbReference type="GO" id="GO:0016917">
    <property type="term" value="F:GABA receptor activity"/>
    <property type="evidence" value="ECO:0000315"/>
    <property type="project" value="dictyBase"/>
</dbReference>
<dbReference type="GO" id="GO:0031152">
    <property type="term" value="P:aggregation involved in sorocarp development"/>
    <property type="evidence" value="ECO:0000315"/>
    <property type="project" value="dictyBase"/>
</dbReference>
<dbReference type="GO" id="GO:0140986">
    <property type="term" value="P:G protein-coupled chemorepellent receptor signaling pathway"/>
    <property type="evidence" value="ECO:0000315"/>
    <property type="project" value="dictyBase"/>
</dbReference>
<dbReference type="GO" id="GO:0007186">
    <property type="term" value="P:G protein-coupled receptor signaling pathway"/>
    <property type="evidence" value="ECO:0000318"/>
    <property type="project" value="GO_Central"/>
</dbReference>
<dbReference type="CDD" id="cd15047">
    <property type="entry name" value="7tmC_GABA-B-like"/>
    <property type="match status" value="1"/>
</dbReference>
<dbReference type="FunFam" id="3.40.50.2300:FF:000516">
    <property type="entry name" value="Metabotropic glutamate receptor-like protein A"/>
    <property type="match status" value="1"/>
</dbReference>
<dbReference type="Gene3D" id="3.40.50.2300">
    <property type="match status" value="2"/>
</dbReference>
<dbReference type="InterPro" id="IPR000337">
    <property type="entry name" value="GPCR_3"/>
</dbReference>
<dbReference type="InterPro" id="IPR017978">
    <property type="entry name" value="GPCR_3_C"/>
</dbReference>
<dbReference type="InterPro" id="IPR051530">
    <property type="entry name" value="mGluR/GABA-B-like"/>
</dbReference>
<dbReference type="InterPro" id="IPR028082">
    <property type="entry name" value="Peripla_BP_I"/>
</dbReference>
<dbReference type="InterPro" id="IPR003760">
    <property type="entry name" value="PnrA-like"/>
</dbReference>
<dbReference type="PANTHER" id="PTHR46924:SF2">
    <property type="entry name" value="METABOTROPIC GLUTAMATE RECEPTOR-LIKE PROTEIN A-RELATED"/>
    <property type="match status" value="1"/>
</dbReference>
<dbReference type="PANTHER" id="PTHR46924">
    <property type="entry name" value="METABOTROPIC GLUTAMATE RECEPTOR-LIKE PROTEIN C-RELATED-RELATED"/>
    <property type="match status" value="1"/>
</dbReference>
<dbReference type="Pfam" id="PF00003">
    <property type="entry name" value="7tm_3"/>
    <property type="match status" value="1"/>
</dbReference>
<dbReference type="Pfam" id="PF02608">
    <property type="entry name" value="Bmp"/>
    <property type="match status" value="1"/>
</dbReference>
<dbReference type="PRINTS" id="PR00248">
    <property type="entry name" value="GPCRMGR"/>
</dbReference>
<dbReference type="SUPFAM" id="SSF53822">
    <property type="entry name" value="Periplasmic binding protein-like I"/>
    <property type="match status" value="1"/>
</dbReference>
<dbReference type="PROSITE" id="PS50259">
    <property type="entry name" value="G_PROTEIN_RECEP_F3_4"/>
    <property type="match status" value="1"/>
</dbReference>
<sequence length="755" mass="84118">MKNLISIILLILIFFNYSKFVKSKNCKIAVLLSGDFSDLGYNYQFNEARVKAESILKLSDFSLYYKNLDESEELSEASFKDAIAQGANLIVVASSGQTEMGLKYAKLYKDSDIYWIIKTSARPVDYLPKVAVLDFNTDRAHFTLGYFAGKMSKTGVVGFVSPGAYIASNGNAFYLGAKEARSNITFVTTFTGSWFNPEVAYKAAEMLISNGADFLGMSQDDMSVQKAVIDSGSLGLGVTGYPTRLIYGSANIGLSYITDWTDVFVKYASHVINDTWPDSDYYKTSLNPGGSLLFDEYSYLVPQSIRDLVNNEIEILKNDDFNPFRCNPMYIDLGYKLDVNGCISYNEFEKNQQVLKGDKYSKTISFGTYTIPIEFVDYSSSMKLGITITSSICIFLCIISIIIVLVFRTARIIKSASPAFLFLILMGCILIFIGCIIFSQSPNEGTCRARVWLLSIGYTIFLGSLLVKNWRIWLLFDNPKLKKRSITNWKLYPWVAGILAADVLILAFWQGLGNIRSESRIGIDSLTKYQYTNVCSSNDQGSIALYILLVFHGIKLLVACFISFKIKVVDIDEFNESKPIASSVYIITFCLFIVIPLMVSPQSVTSQVTTICVCAIVTTLISIILLFGSKFYKMITQGAALNQTFASSSKSSSFSQSLEKKKTGEEDDSESSEENGKKAIVVTQQSVLAHFSSDTEDDENETQQIDEEKDEQIAGSNEDIIQPEENIEENNVSVIQSKRLSNQLNGEVEIDSNNL</sequence>
<feature type="signal peptide" evidence="1">
    <location>
        <begin position="1"/>
        <end position="23"/>
    </location>
</feature>
<feature type="chain" id="PRO_0000370347" description="Metabotropic glutamate receptor-like protein B">
    <location>
        <begin position="24"/>
        <end position="755"/>
    </location>
</feature>
<feature type="topological domain" description="Extracellular" evidence="1">
    <location>
        <begin position="24"/>
        <end position="385"/>
    </location>
</feature>
<feature type="transmembrane region" description="Helical; Name=1" evidence="1">
    <location>
        <begin position="386"/>
        <end position="406"/>
    </location>
</feature>
<feature type="topological domain" description="Cytoplasmic" evidence="1">
    <location>
        <begin position="407"/>
        <end position="417"/>
    </location>
</feature>
<feature type="transmembrane region" description="Helical; Name=2" evidence="1">
    <location>
        <begin position="418"/>
        <end position="438"/>
    </location>
</feature>
<feature type="topological domain" description="Extracellular" evidence="1">
    <location>
        <begin position="439"/>
        <end position="455"/>
    </location>
</feature>
<feature type="transmembrane region" description="Helical; Name=3" evidence="1">
    <location>
        <begin position="456"/>
        <end position="476"/>
    </location>
</feature>
<feature type="topological domain" description="Cytoplasmic" evidence="1">
    <location>
        <begin position="477"/>
        <end position="492"/>
    </location>
</feature>
<feature type="transmembrane region" description="Helical; Name=4" evidence="1">
    <location>
        <begin position="493"/>
        <end position="513"/>
    </location>
</feature>
<feature type="topological domain" description="Extracellular" evidence="1">
    <location>
        <begin position="514"/>
        <end position="541"/>
    </location>
</feature>
<feature type="transmembrane region" description="Helical; Name=5" evidence="1">
    <location>
        <begin position="542"/>
        <end position="562"/>
    </location>
</feature>
<feature type="topological domain" description="Cytoplasmic" evidence="1">
    <location>
        <begin position="563"/>
        <end position="578"/>
    </location>
</feature>
<feature type="transmembrane region" description="Helical; Name=6" evidence="1">
    <location>
        <begin position="579"/>
        <end position="599"/>
    </location>
</feature>
<feature type="topological domain" description="Extracellular" evidence="1">
    <location>
        <begin position="600"/>
        <end position="607"/>
    </location>
</feature>
<feature type="transmembrane region" description="Helical; Name=7" evidence="1">
    <location>
        <begin position="608"/>
        <end position="628"/>
    </location>
</feature>
<feature type="topological domain" description="Cytoplasmic" evidence="1">
    <location>
        <begin position="629"/>
        <end position="755"/>
    </location>
</feature>
<feature type="region of interest" description="Disordered" evidence="2">
    <location>
        <begin position="656"/>
        <end position="676"/>
    </location>
</feature>
<feature type="region of interest" description="Disordered" evidence="2">
    <location>
        <begin position="691"/>
        <end position="729"/>
    </location>
</feature>
<feature type="compositionally biased region" description="Acidic residues" evidence="2">
    <location>
        <begin position="694"/>
        <end position="710"/>
    </location>
</feature>
<feature type="glycosylation site" description="N-linked (GlcNAc...) asparagine" evidence="1">
    <location>
        <position position="16"/>
    </location>
</feature>
<feature type="glycosylation site" description="N-linked (GlcNAc...) asparagine" evidence="1">
    <location>
        <position position="183"/>
    </location>
</feature>
<feature type="glycosylation site" description="N-linked (GlcNAc...) asparagine" evidence="1">
    <location>
        <position position="273"/>
    </location>
</feature>
<name>GRLB_DICDI</name>
<proteinExistence type="evidence at transcript level"/>
<organism>
    <name type="scientific">Dictyostelium discoideum</name>
    <name type="common">Social amoeba</name>
    <dbReference type="NCBI Taxonomy" id="44689"/>
    <lineage>
        <taxon>Eukaryota</taxon>
        <taxon>Amoebozoa</taxon>
        <taxon>Evosea</taxon>
        <taxon>Eumycetozoa</taxon>
        <taxon>Dictyostelia</taxon>
        <taxon>Dictyosteliales</taxon>
        <taxon>Dictyosteliaceae</taxon>
        <taxon>Dictyostelium</taxon>
    </lineage>
</organism>
<protein>
    <recommendedName>
        <fullName>Metabotropic glutamate receptor-like protein B</fullName>
    </recommendedName>
</protein>
<gene>
    <name type="primary">grlB</name>
    <name type="ORF">DDB_G0271686</name>
</gene>